<keyword id="KW-0963">Cytoplasm</keyword>
<keyword id="KW-0324">Glycolysis</keyword>
<keyword id="KW-0456">Lyase</keyword>
<keyword id="KW-0460">Magnesium</keyword>
<keyword id="KW-0479">Metal-binding</keyword>
<keyword id="KW-1185">Reference proteome</keyword>
<keyword id="KW-0964">Secreted</keyword>
<organism>
    <name type="scientific">Nocardia farcinica (strain IFM 10152)</name>
    <dbReference type="NCBI Taxonomy" id="247156"/>
    <lineage>
        <taxon>Bacteria</taxon>
        <taxon>Bacillati</taxon>
        <taxon>Actinomycetota</taxon>
        <taxon>Actinomycetes</taxon>
        <taxon>Mycobacteriales</taxon>
        <taxon>Nocardiaceae</taxon>
        <taxon>Nocardia</taxon>
    </lineage>
</organism>
<protein>
    <recommendedName>
        <fullName evidence="1">Enolase</fullName>
        <ecNumber evidence="1">4.2.1.11</ecNumber>
    </recommendedName>
    <alternativeName>
        <fullName evidence="1">2-phospho-D-glycerate hydro-lyase</fullName>
    </alternativeName>
    <alternativeName>
        <fullName evidence="1">2-phosphoglycerate dehydratase</fullName>
    </alternativeName>
</protein>
<gene>
    <name evidence="1" type="primary">eno</name>
    <name type="ordered locus">NFA_48590</name>
</gene>
<name>ENO_NOCFA</name>
<dbReference type="EC" id="4.2.1.11" evidence="1"/>
<dbReference type="EMBL" id="AP006618">
    <property type="protein sequence ID" value="BAD59711.1"/>
    <property type="molecule type" value="Genomic_DNA"/>
</dbReference>
<dbReference type="RefSeq" id="WP_011211394.1">
    <property type="nucleotide sequence ID" value="NC_006361.1"/>
</dbReference>
<dbReference type="SMR" id="Q5YQ30"/>
<dbReference type="STRING" id="247156.NFA_48590"/>
<dbReference type="GeneID" id="61135455"/>
<dbReference type="KEGG" id="nfa:NFA_48590"/>
<dbReference type="eggNOG" id="COG0148">
    <property type="taxonomic scope" value="Bacteria"/>
</dbReference>
<dbReference type="HOGENOM" id="CLU_031223_2_1_11"/>
<dbReference type="OrthoDB" id="9804716at2"/>
<dbReference type="UniPathway" id="UPA00109">
    <property type="reaction ID" value="UER00187"/>
</dbReference>
<dbReference type="Proteomes" id="UP000006820">
    <property type="component" value="Chromosome"/>
</dbReference>
<dbReference type="GO" id="GO:0009986">
    <property type="term" value="C:cell surface"/>
    <property type="evidence" value="ECO:0007669"/>
    <property type="project" value="UniProtKB-SubCell"/>
</dbReference>
<dbReference type="GO" id="GO:0005576">
    <property type="term" value="C:extracellular region"/>
    <property type="evidence" value="ECO:0007669"/>
    <property type="project" value="UniProtKB-SubCell"/>
</dbReference>
<dbReference type="GO" id="GO:0000015">
    <property type="term" value="C:phosphopyruvate hydratase complex"/>
    <property type="evidence" value="ECO:0007669"/>
    <property type="project" value="InterPro"/>
</dbReference>
<dbReference type="GO" id="GO:0000287">
    <property type="term" value="F:magnesium ion binding"/>
    <property type="evidence" value="ECO:0007669"/>
    <property type="project" value="UniProtKB-UniRule"/>
</dbReference>
<dbReference type="GO" id="GO:0004634">
    <property type="term" value="F:phosphopyruvate hydratase activity"/>
    <property type="evidence" value="ECO:0007669"/>
    <property type="project" value="UniProtKB-UniRule"/>
</dbReference>
<dbReference type="GO" id="GO:0006096">
    <property type="term" value="P:glycolytic process"/>
    <property type="evidence" value="ECO:0007669"/>
    <property type="project" value="UniProtKB-UniRule"/>
</dbReference>
<dbReference type="CDD" id="cd03313">
    <property type="entry name" value="enolase"/>
    <property type="match status" value="1"/>
</dbReference>
<dbReference type="FunFam" id="3.20.20.120:FF:000001">
    <property type="entry name" value="Enolase"/>
    <property type="match status" value="1"/>
</dbReference>
<dbReference type="FunFam" id="3.30.390.10:FF:000001">
    <property type="entry name" value="Enolase"/>
    <property type="match status" value="1"/>
</dbReference>
<dbReference type="Gene3D" id="3.20.20.120">
    <property type="entry name" value="Enolase-like C-terminal domain"/>
    <property type="match status" value="1"/>
</dbReference>
<dbReference type="Gene3D" id="3.30.390.10">
    <property type="entry name" value="Enolase-like, N-terminal domain"/>
    <property type="match status" value="1"/>
</dbReference>
<dbReference type="HAMAP" id="MF_00318">
    <property type="entry name" value="Enolase"/>
    <property type="match status" value="1"/>
</dbReference>
<dbReference type="InterPro" id="IPR000941">
    <property type="entry name" value="Enolase"/>
</dbReference>
<dbReference type="InterPro" id="IPR036849">
    <property type="entry name" value="Enolase-like_C_sf"/>
</dbReference>
<dbReference type="InterPro" id="IPR029017">
    <property type="entry name" value="Enolase-like_N"/>
</dbReference>
<dbReference type="InterPro" id="IPR020810">
    <property type="entry name" value="Enolase_C"/>
</dbReference>
<dbReference type="InterPro" id="IPR020809">
    <property type="entry name" value="Enolase_CS"/>
</dbReference>
<dbReference type="InterPro" id="IPR020811">
    <property type="entry name" value="Enolase_N"/>
</dbReference>
<dbReference type="NCBIfam" id="TIGR01060">
    <property type="entry name" value="eno"/>
    <property type="match status" value="1"/>
</dbReference>
<dbReference type="PANTHER" id="PTHR11902">
    <property type="entry name" value="ENOLASE"/>
    <property type="match status" value="1"/>
</dbReference>
<dbReference type="PANTHER" id="PTHR11902:SF1">
    <property type="entry name" value="ENOLASE"/>
    <property type="match status" value="1"/>
</dbReference>
<dbReference type="Pfam" id="PF00113">
    <property type="entry name" value="Enolase_C"/>
    <property type="match status" value="1"/>
</dbReference>
<dbReference type="Pfam" id="PF03952">
    <property type="entry name" value="Enolase_N"/>
    <property type="match status" value="1"/>
</dbReference>
<dbReference type="PIRSF" id="PIRSF001400">
    <property type="entry name" value="Enolase"/>
    <property type="match status" value="1"/>
</dbReference>
<dbReference type="PRINTS" id="PR00148">
    <property type="entry name" value="ENOLASE"/>
</dbReference>
<dbReference type="SFLD" id="SFLDF00002">
    <property type="entry name" value="enolase"/>
    <property type="match status" value="1"/>
</dbReference>
<dbReference type="SFLD" id="SFLDG00178">
    <property type="entry name" value="enolase"/>
    <property type="match status" value="1"/>
</dbReference>
<dbReference type="SMART" id="SM01192">
    <property type="entry name" value="Enolase_C"/>
    <property type="match status" value="1"/>
</dbReference>
<dbReference type="SMART" id="SM01193">
    <property type="entry name" value="Enolase_N"/>
    <property type="match status" value="1"/>
</dbReference>
<dbReference type="SUPFAM" id="SSF51604">
    <property type="entry name" value="Enolase C-terminal domain-like"/>
    <property type="match status" value="1"/>
</dbReference>
<dbReference type="SUPFAM" id="SSF54826">
    <property type="entry name" value="Enolase N-terminal domain-like"/>
    <property type="match status" value="1"/>
</dbReference>
<dbReference type="PROSITE" id="PS00164">
    <property type="entry name" value="ENOLASE"/>
    <property type="match status" value="1"/>
</dbReference>
<sequence length="428" mass="44994">MAIIEQVGAREILDSRGNPTVEVEIALDDGTLTRAAVPSGASTGEHEAVELRDGGDRYNGKGVLKAVEGVLDEIAPAVIGLDAVEQRTVDQVLLDLDGTPDKSRLGANALLGVSLAVARAAAESSGLELFRYLGGPNAHVLPVPMMNILNGGAHADTGVDVQEFMVAPIGAPTFKESLRWGAEVYHALKAVLKSKGLSTGLGDEGGFAPDVAGTREALDLIAQAIAKTGLKLGSDVALALDVAATEFYTSGSGYKFEGTVRSAEEMAQFYSELLGAYPLVSIEDPLSEDDWDGWVALTDQIGDKIQLVGDDLFVTNPERLEDGIAKGAANALLVKVNQIGTLTETLDAVELAHRNGYKTMMSHRSGETEDTTIADLAVAVGSGQIKTGAPARSERVAKYNQLLRIEDALGDSARYAGDVAFPRFVFDG</sequence>
<evidence type="ECO:0000255" key="1">
    <source>
        <dbReference type="HAMAP-Rule" id="MF_00318"/>
    </source>
</evidence>
<proteinExistence type="inferred from homology"/>
<reference key="1">
    <citation type="journal article" date="2004" name="Proc. Natl. Acad. Sci. U.S.A.">
        <title>The complete genomic sequence of Nocardia farcinica IFM 10152.</title>
        <authorList>
            <person name="Ishikawa J."/>
            <person name="Yamashita A."/>
            <person name="Mikami Y."/>
            <person name="Hoshino Y."/>
            <person name="Kurita H."/>
            <person name="Hotta K."/>
            <person name="Shiba T."/>
            <person name="Hattori M."/>
        </authorList>
    </citation>
    <scope>NUCLEOTIDE SEQUENCE [LARGE SCALE GENOMIC DNA]</scope>
    <source>
        <strain>IFM 10152</strain>
    </source>
</reference>
<feature type="chain" id="PRO_0000133937" description="Enolase">
    <location>
        <begin position="1"/>
        <end position="428"/>
    </location>
</feature>
<feature type="active site" description="Proton donor" evidence="1">
    <location>
        <position position="204"/>
    </location>
</feature>
<feature type="active site" description="Proton acceptor" evidence="1">
    <location>
        <position position="335"/>
    </location>
</feature>
<feature type="binding site" evidence="1">
    <location>
        <position position="162"/>
    </location>
    <ligand>
        <name>(2R)-2-phosphoglycerate</name>
        <dbReference type="ChEBI" id="CHEBI:58289"/>
    </ligand>
</feature>
<feature type="binding site" evidence="1">
    <location>
        <position position="241"/>
    </location>
    <ligand>
        <name>Mg(2+)</name>
        <dbReference type="ChEBI" id="CHEBI:18420"/>
    </ligand>
</feature>
<feature type="binding site" evidence="1">
    <location>
        <position position="283"/>
    </location>
    <ligand>
        <name>Mg(2+)</name>
        <dbReference type="ChEBI" id="CHEBI:18420"/>
    </ligand>
</feature>
<feature type="binding site" evidence="1">
    <location>
        <position position="310"/>
    </location>
    <ligand>
        <name>Mg(2+)</name>
        <dbReference type="ChEBI" id="CHEBI:18420"/>
    </ligand>
</feature>
<feature type="binding site" evidence="1">
    <location>
        <position position="335"/>
    </location>
    <ligand>
        <name>(2R)-2-phosphoglycerate</name>
        <dbReference type="ChEBI" id="CHEBI:58289"/>
    </ligand>
</feature>
<feature type="binding site" evidence="1">
    <location>
        <position position="364"/>
    </location>
    <ligand>
        <name>(2R)-2-phosphoglycerate</name>
        <dbReference type="ChEBI" id="CHEBI:58289"/>
    </ligand>
</feature>
<feature type="binding site" evidence="1">
    <location>
        <position position="365"/>
    </location>
    <ligand>
        <name>(2R)-2-phosphoglycerate</name>
        <dbReference type="ChEBI" id="CHEBI:58289"/>
    </ligand>
</feature>
<feature type="binding site" evidence="1">
    <location>
        <position position="386"/>
    </location>
    <ligand>
        <name>(2R)-2-phosphoglycerate</name>
        <dbReference type="ChEBI" id="CHEBI:58289"/>
    </ligand>
</feature>
<comment type="function">
    <text evidence="1">Catalyzes the reversible conversion of 2-phosphoglycerate (2-PG) into phosphoenolpyruvate (PEP). It is essential for the degradation of carbohydrates via glycolysis.</text>
</comment>
<comment type="catalytic activity">
    <reaction evidence="1">
        <text>(2R)-2-phosphoglycerate = phosphoenolpyruvate + H2O</text>
        <dbReference type="Rhea" id="RHEA:10164"/>
        <dbReference type="ChEBI" id="CHEBI:15377"/>
        <dbReference type="ChEBI" id="CHEBI:58289"/>
        <dbReference type="ChEBI" id="CHEBI:58702"/>
        <dbReference type="EC" id="4.2.1.11"/>
    </reaction>
</comment>
<comment type="cofactor">
    <cofactor evidence="1">
        <name>Mg(2+)</name>
        <dbReference type="ChEBI" id="CHEBI:18420"/>
    </cofactor>
    <text evidence="1">Binds a second Mg(2+) ion via substrate during catalysis.</text>
</comment>
<comment type="pathway">
    <text evidence="1">Carbohydrate degradation; glycolysis; pyruvate from D-glyceraldehyde 3-phosphate: step 4/5.</text>
</comment>
<comment type="subcellular location">
    <subcellularLocation>
        <location evidence="1">Cytoplasm</location>
    </subcellularLocation>
    <subcellularLocation>
        <location evidence="1">Secreted</location>
    </subcellularLocation>
    <subcellularLocation>
        <location evidence="1">Cell surface</location>
    </subcellularLocation>
    <text evidence="1">Fractions of enolase are present in both the cytoplasm and on the cell surface.</text>
</comment>
<comment type="similarity">
    <text evidence="1">Belongs to the enolase family.</text>
</comment>
<accession>Q5YQ30</accession>